<evidence type="ECO:0000250" key="1"/>
<evidence type="ECO:0000305" key="2"/>
<gene>
    <name type="primary">rpl22</name>
</gene>
<sequence length="119" mass="13462">MGTDNKSKVEARASARYFKMSANKARRVINQIRGRSYEQALILLEFMPYRACYAILQLISSAAANANHNLGLSRANPFISEAKVDESTLFKRFQPRAQGRGYPIHKPTCHITITMIEKT</sequence>
<proteinExistence type="inferred from homology"/>
<protein>
    <recommendedName>
        <fullName evidence="2">Large ribosomal subunit protein uL22c</fullName>
    </recommendedName>
    <alternativeName>
        <fullName>50S ribosomal protein L22, chloroplastic</fullName>
    </alternativeName>
</protein>
<feature type="chain" id="PRO_0000354555" description="Large ribosomal subunit protein uL22c">
    <location>
        <begin position="1"/>
        <end position="119"/>
    </location>
</feature>
<comment type="function">
    <text evidence="1">This protein binds specifically to 23S rRNA.</text>
</comment>
<comment type="function">
    <text evidence="1">The globular domain of the protein is located near the polypeptide exit tunnel on the outside of the subunit, while an extended beta-hairpin is found that lines the wall of the exit tunnel in the center of the 70S ribosome.</text>
</comment>
<comment type="subunit">
    <text evidence="1">Part of the 50S ribosomal subunit.</text>
</comment>
<comment type="subcellular location">
    <subcellularLocation>
        <location>Plastid</location>
        <location>Chloroplast</location>
    </subcellularLocation>
</comment>
<comment type="similarity">
    <text evidence="2">Belongs to the universal ribosomal protein uL22 family.</text>
</comment>
<name>RK22_ANGEV</name>
<keyword id="KW-0150">Chloroplast</keyword>
<keyword id="KW-0934">Plastid</keyword>
<keyword id="KW-0687">Ribonucleoprotein</keyword>
<keyword id="KW-0689">Ribosomal protein</keyword>
<keyword id="KW-0694">RNA-binding</keyword>
<keyword id="KW-0699">rRNA-binding</keyword>
<organism>
    <name type="scientific">Angiopteris evecta</name>
    <name type="common">Mule's foot fern</name>
    <name type="synonym">Polypodium evectum</name>
    <dbReference type="NCBI Taxonomy" id="13825"/>
    <lineage>
        <taxon>Eukaryota</taxon>
        <taxon>Viridiplantae</taxon>
        <taxon>Streptophyta</taxon>
        <taxon>Embryophyta</taxon>
        <taxon>Tracheophyta</taxon>
        <taxon>Polypodiopsida</taxon>
        <taxon>Marattiidae</taxon>
        <taxon>Marattiales</taxon>
        <taxon>Marattiaceae</taxon>
        <taxon>Angiopteris</taxon>
    </lineage>
</organism>
<accession>A2T373</accession>
<reference key="1">
    <citation type="journal article" date="2007" name="Am. Fern J.">
        <title>The complete plastid genome sequence of Angiopteris evecta (G. Forst.) Hoffm. (Marattiaceae).</title>
        <authorList>
            <person name="Roper J.M."/>
            <person name="Hansen S.K."/>
            <person name="Wolf P.G."/>
            <person name="Karol K.G."/>
            <person name="Mandoli D.F."/>
            <person name="Everett K.D.E."/>
            <person name="Kuehl J.V."/>
            <person name="Boore J.L."/>
        </authorList>
    </citation>
    <scope>NUCLEOTIDE SEQUENCE [LARGE SCALE GENOMIC DNA]</scope>
</reference>
<geneLocation type="chloroplast"/>
<dbReference type="EMBL" id="DQ821119">
    <property type="protein sequence ID" value="ABG79640.1"/>
    <property type="molecule type" value="Genomic_DNA"/>
</dbReference>
<dbReference type="RefSeq" id="YP_001023741.1">
    <property type="nucleotide sequence ID" value="NC_008829.1"/>
</dbReference>
<dbReference type="SMR" id="A2T373"/>
<dbReference type="GeneID" id="4788213"/>
<dbReference type="GO" id="GO:0009507">
    <property type="term" value="C:chloroplast"/>
    <property type="evidence" value="ECO:0007669"/>
    <property type="project" value="UniProtKB-SubCell"/>
</dbReference>
<dbReference type="GO" id="GO:0015934">
    <property type="term" value="C:large ribosomal subunit"/>
    <property type="evidence" value="ECO:0007669"/>
    <property type="project" value="InterPro"/>
</dbReference>
<dbReference type="GO" id="GO:0019843">
    <property type="term" value="F:rRNA binding"/>
    <property type="evidence" value="ECO:0007669"/>
    <property type="project" value="UniProtKB-UniRule"/>
</dbReference>
<dbReference type="GO" id="GO:0003735">
    <property type="term" value="F:structural constituent of ribosome"/>
    <property type="evidence" value="ECO:0007669"/>
    <property type="project" value="InterPro"/>
</dbReference>
<dbReference type="GO" id="GO:0006412">
    <property type="term" value="P:translation"/>
    <property type="evidence" value="ECO:0007669"/>
    <property type="project" value="UniProtKB-UniRule"/>
</dbReference>
<dbReference type="CDD" id="cd00336">
    <property type="entry name" value="Ribosomal_L22"/>
    <property type="match status" value="1"/>
</dbReference>
<dbReference type="Gene3D" id="3.90.470.10">
    <property type="entry name" value="Ribosomal protein L22/L17"/>
    <property type="match status" value="1"/>
</dbReference>
<dbReference type="HAMAP" id="MF_01331_B">
    <property type="entry name" value="Ribosomal_uL22_B"/>
    <property type="match status" value="1"/>
</dbReference>
<dbReference type="InterPro" id="IPR001063">
    <property type="entry name" value="Ribosomal_uL22"/>
</dbReference>
<dbReference type="InterPro" id="IPR005727">
    <property type="entry name" value="Ribosomal_uL22_bac/chlpt-type"/>
</dbReference>
<dbReference type="InterPro" id="IPR047867">
    <property type="entry name" value="Ribosomal_uL22_bac/org-type"/>
</dbReference>
<dbReference type="InterPro" id="IPR018260">
    <property type="entry name" value="Ribosomal_uL22_CS"/>
</dbReference>
<dbReference type="InterPro" id="IPR036394">
    <property type="entry name" value="Ribosomal_uL22_sf"/>
</dbReference>
<dbReference type="NCBIfam" id="TIGR01044">
    <property type="entry name" value="rplV_bact"/>
    <property type="match status" value="1"/>
</dbReference>
<dbReference type="PANTHER" id="PTHR13501">
    <property type="entry name" value="CHLOROPLAST 50S RIBOSOMAL PROTEIN L22-RELATED"/>
    <property type="match status" value="1"/>
</dbReference>
<dbReference type="PANTHER" id="PTHR13501:SF10">
    <property type="entry name" value="LARGE RIBOSOMAL SUBUNIT PROTEIN UL22M"/>
    <property type="match status" value="1"/>
</dbReference>
<dbReference type="Pfam" id="PF00237">
    <property type="entry name" value="Ribosomal_L22"/>
    <property type="match status" value="1"/>
</dbReference>
<dbReference type="SUPFAM" id="SSF54843">
    <property type="entry name" value="Ribosomal protein L22"/>
    <property type="match status" value="1"/>
</dbReference>
<dbReference type="PROSITE" id="PS00464">
    <property type="entry name" value="RIBOSOMAL_L22"/>
    <property type="match status" value="1"/>
</dbReference>